<organism>
    <name type="scientific">Vaccinia virus (strain Copenhagen)</name>
    <name type="common">VACV</name>
    <dbReference type="NCBI Taxonomy" id="10249"/>
    <lineage>
        <taxon>Viruses</taxon>
        <taxon>Varidnaviria</taxon>
        <taxon>Bamfordvirae</taxon>
        <taxon>Nucleocytoviricota</taxon>
        <taxon>Pokkesviricetes</taxon>
        <taxon>Chitovirales</taxon>
        <taxon>Poxviridae</taxon>
        <taxon>Chordopoxvirinae</taxon>
        <taxon>Orthopoxvirus</taxon>
        <taxon>Vaccinia virus</taxon>
    </lineage>
</organism>
<reference key="1">
    <citation type="journal article" date="1990" name="Virology">
        <title>The complete DNA sequence of vaccinia virus.</title>
        <authorList>
            <person name="Goebel S.J."/>
            <person name="Johnson G.P."/>
            <person name="Perkus M.E."/>
            <person name="Davis S.W."/>
            <person name="Winslow J.P."/>
            <person name="Paoletti E."/>
        </authorList>
    </citation>
    <scope>NUCLEOTIDE SEQUENCE [LARGE SCALE GENOMIC DNA]</scope>
</reference>
<reference key="2">
    <citation type="journal article" date="1990" name="Virology">
        <title>Appendix to 'The complete DNA sequence of vaccinia virus'.</title>
        <authorList>
            <person name="Goebel S.J."/>
            <person name="Johnson G.P."/>
            <person name="Perkus M.E."/>
            <person name="Davis S.W."/>
            <person name="Winslow J.P."/>
            <person name="Paoletti E."/>
        </authorList>
    </citation>
    <scope>COMPLETE GENOME</scope>
</reference>
<protein>
    <recommendedName>
        <fullName>Uncharacterized 8.8 kDa protein</fullName>
    </recommendedName>
</protein>
<sequence>MIFFFISNWFRSLVCCGFSRCCTYCINAITSVCDGVCMIFYIISNWFRSRDFEYRRAIRIIYIIRFLRTSFW</sequence>
<accession>P20530</accession>
<gene>
    <name type="ORF">A ORF U</name>
</gene>
<feature type="chain" id="PRO_0000099666" description="Uncharacterized 8.8 kDa protein">
    <location>
        <begin position="1"/>
        <end position="72"/>
    </location>
</feature>
<organismHost>
    <name type="scientific">Homo sapiens</name>
    <name type="common">Human</name>
    <dbReference type="NCBI Taxonomy" id="9606"/>
</organismHost>
<dbReference type="EMBL" id="M35027">
    <property type="protein sequence ID" value="AAA48192.1"/>
    <property type="molecule type" value="Genomic_DNA"/>
</dbReference>
<dbReference type="PIR" id="H42525">
    <property type="entry name" value="H42525"/>
</dbReference>
<dbReference type="SMR" id="P20530"/>
<dbReference type="Proteomes" id="UP000008269">
    <property type="component" value="Segment"/>
</dbReference>
<proteinExistence type="predicted"/>
<name>YVAU_VACCC</name>
<keyword id="KW-1185">Reference proteome</keyword>